<sequence length="316" mass="33906">MPLDTLRIATRKSPLAVWQAEHVAALVKARHPGVRVELVGMTTQGDRILDTPLAKVGGKGLFVKELETGLLEGRADIAVHSMKDVPMELPEGLCLPVILDREDPRDAFVSNTFKSLDELPRDARVGTSSLRRQCQLRHDHPHFQILDLRGNVNTRLAKLDAGEFDAIILAAAGLKRLGFEVRIASEITPEQSLPAIGQGAIGIECRENDPEVMALIGSLDDPDTHVRVAAERAMNARLNGGCQVPIAGYAELTDADTLRLRGLVGEPDGSLILRAELSGPRAEAEALGRAVADLLLHEGAGPILAELGLGPDADRS</sequence>
<proteinExistence type="inferred from homology"/>
<gene>
    <name evidence="1" type="primary">hemC</name>
    <name type="ordered locus">Tgr7_0029</name>
</gene>
<evidence type="ECO:0000255" key="1">
    <source>
        <dbReference type="HAMAP-Rule" id="MF_00260"/>
    </source>
</evidence>
<keyword id="KW-0627">Porphyrin biosynthesis</keyword>
<keyword id="KW-1185">Reference proteome</keyword>
<keyword id="KW-0808">Transferase</keyword>
<accession>B8GSU8</accession>
<dbReference type="EC" id="2.5.1.61" evidence="1"/>
<dbReference type="EMBL" id="CP001339">
    <property type="protein sequence ID" value="ACL71133.1"/>
    <property type="molecule type" value="Genomic_DNA"/>
</dbReference>
<dbReference type="RefSeq" id="WP_012636622.1">
    <property type="nucleotide sequence ID" value="NC_011901.1"/>
</dbReference>
<dbReference type="SMR" id="B8GSU8"/>
<dbReference type="STRING" id="396588.Tgr7_0029"/>
<dbReference type="KEGG" id="tgr:Tgr7_0029"/>
<dbReference type="eggNOG" id="COG0181">
    <property type="taxonomic scope" value="Bacteria"/>
</dbReference>
<dbReference type="HOGENOM" id="CLU_019704_0_2_6"/>
<dbReference type="OrthoDB" id="9810298at2"/>
<dbReference type="UniPathway" id="UPA00251">
    <property type="reaction ID" value="UER00319"/>
</dbReference>
<dbReference type="Proteomes" id="UP000002383">
    <property type="component" value="Chromosome"/>
</dbReference>
<dbReference type="GO" id="GO:0005737">
    <property type="term" value="C:cytoplasm"/>
    <property type="evidence" value="ECO:0007669"/>
    <property type="project" value="TreeGrafter"/>
</dbReference>
<dbReference type="GO" id="GO:0004418">
    <property type="term" value="F:hydroxymethylbilane synthase activity"/>
    <property type="evidence" value="ECO:0007669"/>
    <property type="project" value="UniProtKB-UniRule"/>
</dbReference>
<dbReference type="GO" id="GO:0006782">
    <property type="term" value="P:protoporphyrinogen IX biosynthetic process"/>
    <property type="evidence" value="ECO:0007669"/>
    <property type="project" value="UniProtKB-UniRule"/>
</dbReference>
<dbReference type="CDD" id="cd13646">
    <property type="entry name" value="PBP2_EcHMBS_like"/>
    <property type="match status" value="1"/>
</dbReference>
<dbReference type="FunFam" id="3.30.160.40:FF:000002">
    <property type="entry name" value="Porphobilinogen deaminase"/>
    <property type="match status" value="1"/>
</dbReference>
<dbReference type="FunFam" id="3.40.190.10:FF:000004">
    <property type="entry name" value="Porphobilinogen deaminase"/>
    <property type="match status" value="1"/>
</dbReference>
<dbReference type="FunFam" id="3.40.190.10:FF:000005">
    <property type="entry name" value="Porphobilinogen deaminase"/>
    <property type="match status" value="1"/>
</dbReference>
<dbReference type="Gene3D" id="3.40.190.10">
    <property type="entry name" value="Periplasmic binding protein-like II"/>
    <property type="match status" value="2"/>
</dbReference>
<dbReference type="Gene3D" id="3.30.160.40">
    <property type="entry name" value="Porphobilinogen deaminase, C-terminal domain"/>
    <property type="match status" value="1"/>
</dbReference>
<dbReference type="HAMAP" id="MF_00260">
    <property type="entry name" value="Porphobil_deam"/>
    <property type="match status" value="1"/>
</dbReference>
<dbReference type="InterPro" id="IPR000860">
    <property type="entry name" value="HemC"/>
</dbReference>
<dbReference type="InterPro" id="IPR022419">
    <property type="entry name" value="Porphobilin_deaminase_cofac_BS"/>
</dbReference>
<dbReference type="InterPro" id="IPR022417">
    <property type="entry name" value="Porphobilin_deaminase_N"/>
</dbReference>
<dbReference type="InterPro" id="IPR022418">
    <property type="entry name" value="Porphobilinogen_deaminase_C"/>
</dbReference>
<dbReference type="InterPro" id="IPR036803">
    <property type="entry name" value="Porphobilinogen_deaminase_C_sf"/>
</dbReference>
<dbReference type="NCBIfam" id="TIGR00212">
    <property type="entry name" value="hemC"/>
    <property type="match status" value="1"/>
</dbReference>
<dbReference type="PANTHER" id="PTHR11557">
    <property type="entry name" value="PORPHOBILINOGEN DEAMINASE"/>
    <property type="match status" value="1"/>
</dbReference>
<dbReference type="PANTHER" id="PTHR11557:SF0">
    <property type="entry name" value="PORPHOBILINOGEN DEAMINASE"/>
    <property type="match status" value="1"/>
</dbReference>
<dbReference type="Pfam" id="PF01379">
    <property type="entry name" value="Porphobil_deam"/>
    <property type="match status" value="1"/>
</dbReference>
<dbReference type="Pfam" id="PF03900">
    <property type="entry name" value="Porphobil_deamC"/>
    <property type="match status" value="1"/>
</dbReference>
<dbReference type="PIRSF" id="PIRSF001438">
    <property type="entry name" value="4pyrrol_synth_OHMeBilane_synth"/>
    <property type="match status" value="1"/>
</dbReference>
<dbReference type="PRINTS" id="PR00151">
    <property type="entry name" value="PORPHBDMNASE"/>
</dbReference>
<dbReference type="SUPFAM" id="SSF53850">
    <property type="entry name" value="Periplasmic binding protein-like II"/>
    <property type="match status" value="1"/>
</dbReference>
<dbReference type="SUPFAM" id="SSF54782">
    <property type="entry name" value="Porphobilinogen deaminase (hydroxymethylbilane synthase), C-terminal domain"/>
    <property type="match status" value="1"/>
</dbReference>
<dbReference type="PROSITE" id="PS00533">
    <property type="entry name" value="PORPHOBILINOGEN_DEAM"/>
    <property type="match status" value="1"/>
</dbReference>
<feature type="chain" id="PRO_1000190293" description="Porphobilinogen deaminase">
    <location>
        <begin position="1"/>
        <end position="316"/>
    </location>
</feature>
<feature type="modified residue" description="S-(dipyrrolylmethanemethyl)cysteine" evidence="1">
    <location>
        <position position="242"/>
    </location>
</feature>
<organism>
    <name type="scientific">Thioalkalivibrio sulfidiphilus (strain HL-EbGR7)</name>
    <dbReference type="NCBI Taxonomy" id="396588"/>
    <lineage>
        <taxon>Bacteria</taxon>
        <taxon>Pseudomonadati</taxon>
        <taxon>Pseudomonadota</taxon>
        <taxon>Gammaproteobacteria</taxon>
        <taxon>Chromatiales</taxon>
        <taxon>Ectothiorhodospiraceae</taxon>
        <taxon>Thioalkalivibrio</taxon>
    </lineage>
</organism>
<comment type="function">
    <text evidence="1">Tetrapolymerization of the monopyrrole PBG into the hydroxymethylbilane pre-uroporphyrinogen in several discrete steps.</text>
</comment>
<comment type="catalytic activity">
    <reaction evidence="1">
        <text>4 porphobilinogen + H2O = hydroxymethylbilane + 4 NH4(+)</text>
        <dbReference type="Rhea" id="RHEA:13185"/>
        <dbReference type="ChEBI" id="CHEBI:15377"/>
        <dbReference type="ChEBI" id="CHEBI:28938"/>
        <dbReference type="ChEBI" id="CHEBI:57845"/>
        <dbReference type="ChEBI" id="CHEBI:58126"/>
        <dbReference type="EC" id="2.5.1.61"/>
    </reaction>
</comment>
<comment type="cofactor">
    <cofactor evidence="1">
        <name>dipyrromethane</name>
        <dbReference type="ChEBI" id="CHEBI:60342"/>
    </cofactor>
    <text evidence="1">Binds 1 dipyrromethane group covalently.</text>
</comment>
<comment type="pathway">
    <text evidence="1">Porphyrin-containing compound metabolism; protoporphyrin-IX biosynthesis; coproporphyrinogen-III from 5-aminolevulinate: step 2/4.</text>
</comment>
<comment type="subunit">
    <text evidence="1">Monomer.</text>
</comment>
<comment type="miscellaneous">
    <text evidence="1">The porphobilinogen subunits are added to the dipyrromethane group.</text>
</comment>
<comment type="similarity">
    <text evidence="1">Belongs to the HMBS family.</text>
</comment>
<reference key="1">
    <citation type="journal article" date="2011" name="Stand. Genomic Sci.">
        <title>Complete genome sequence of 'Thioalkalivibrio sulfidophilus' HL-EbGr7.</title>
        <authorList>
            <person name="Muyzer G."/>
            <person name="Sorokin D.Y."/>
            <person name="Mavromatis K."/>
            <person name="Lapidus A."/>
            <person name="Clum A."/>
            <person name="Ivanova N."/>
            <person name="Pati A."/>
            <person name="d'Haeseleer P."/>
            <person name="Woyke T."/>
            <person name="Kyrpides N.C."/>
        </authorList>
    </citation>
    <scope>NUCLEOTIDE SEQUENCE [LARGE SCALE GENOMIC DNA]</scope>
    <source>
        <strain>HL-EbGR7</strain>
    </source>
</reference>
<name>HEM3_THISH</name>
<protein>
    <recommendedName>
        <fullName evidence="1">Porphobilinogen deaminase</fullName>
        <shortName evidence="1">PBG</shortName>
        <ecNumber evidence="1">2.5.1.61</ecNumber>
    </recommendedName>
    <alternativeName>
        <fullName evidence="1">Hydroxymethylbilane synthase</fullName>
        <shortName evidence="1">HMBS</shortName>
    </alternativeName>
    <alternativeName>
        <fullName evidence="1">Pre-uroporphyrinogen synthase</fullName>
    </alternativeName>
</protein>